<gene>
    <name evidence="20" type="primary">ESYT2</name>
    <name type="synonym">FAM62B</name>
    <name type="synonym">KIAA1228</name>
</gene>
<comment type="function">
    <text evidence="7 8 9 11 12">Tethers the endoplasmic reticulum to the cell membrane and promotes the formation of appositions between the endoplasmic reticulum and the cell membrane. Binds glycerophospholipids in a barrel-like domain and may play a role in cellular lipid transport. Plays a role in FGF signaling via its role in the rapid internalization of FGFR1 that has been activated by FGF1 binding; this occurs most likely via the AP-2 complex. Promotes the localization of SACM1L at endoplasmic reticulum-plasma membrane contact sites (EPCS) (PubMed:27044890).</text>
</comment>
<comment type="subunit">
    <text evidence="8 9 10 11">Homodimer. Interacts with ESYT1 and ESYT3. Interacts with FGFR1 that has been activated by FGF1 binding. Interacts with the AP-2 complex; identified in a complex with the AP-2 complex and FGFR1.</text>
</comment>
<comment type="interaction">
    <interactant intactId="EBI-3184170">
        <id>A0FGR8</id>
    </interactant>
    <interactant intactId="EBI-355956">
        <id>Q9BSJ8</id>
        <label>ESYT1</label>
    </interactant>
    <organismsDiffer>false</organismsDiffer>
    <experiments>7</experiments>
</comment>
<comment type="interaction">
    <interactant intactId="EBI-3184170">
        <id>A0FGR8</id>
    </interactant>
    <interactant intactId="EBI-3184170">
        <id>A0FGR8</id>
        <label>ESYT2</label>
    </interactant>
    <organismsDiffer>false</organismsDiffer>
    <experiments>3</experiments>
</comment>
<comment type="interaction">
    <interactant intactId="EBI-3184170">
        <id>A0FGR8</id>
    </interactant>
    <interactant intactId="EBI-8771391">
        <id>A0FGR9</id>
        <label>ESYT3</label>
    </interactant>
    <organismsDiffer>false</organismsDiffer>
    <experiments>4</experiments>
</comment>
<comment type="subcellular location">
    <subcellularLocation>
        <location evidence="7 8 9 13">Cell membrane</location>
        <topology evidence="7">Peripheral membrane protein</topology>
    </subcellularLocation>
    <subcellularLocation>
        <location evidence="9 13">Endoplasmic reticulum membrane</location>
        <topology evidence="2">Multi-pass membrane protein</topology>
    </subcellularLocation>
    <text evidence="7 9 13 14">Localizes to endoplasmic reticulum-plasma membrane contact sites (EPCS) (PubMed:23791178, PubMed:27044890, PubMed:29469807, PubMed:30220461). Recruited to the cell membrane via the third C2 domain (PubMed:17360437).</text>
</comment>
<comment type="alternative products">
    <event type="alternative splicing"/>
    <isoform>
        <id>A0FGR8-1</id>
        <name>1</name>
        <sequence type="displayed"/>
    </isoform>
    <isoform>
        <id>A0FGR8-2</id>
        <name>2</name>
        <sequence type="described" ref="VSP_023239"/>
    </isoform>
    <isoform>
        <id>A0FGR8-4</id>
        <name>4</name>
        <sequence type="described" ref="VSP_023238 VSP_023241 VSP_023242"/>
    </isoform>
    <isoform>
        <id>A0FGR8-5</id>
        <name>5</name>
        <sequence type="described" ref="VSP_023236 VSP_023240"/>
    </isoform>
    <isoform>
        <id>A0FGR8-6</id>
        <name>6</name>
        <sequence type="described" ref="VSP_038324"/>
    </isoform>
</comment>
<comment type="tissue specificity">
    <text evidence="7">Widely expressed with high level in cerebellum.</text>
</comment>
<comment type="domain">
    <text evidence="9">Anchored to the endoplasmic reticulum membrane by a transmembrane hairpin structure; both N-terminus and C-terminus are cytoplasmic.</text>
</comment>
<comment type="domain">
    <text evidence="9 10">The C2 domains mediate lipid and calcium binding. The N-terminal C2 domain binds calcium ions and is important for calcium-dependent lipid binding and interaction with membranes. Two calcium ions are bound at a high-affinity site and a third calcium ion is bound with lower affinity. May bind up to four calcium ions. In contrast, the second C2 domain apparently does not bind calcium (PubMed:24373768). The third C2 domain mediates interaction with membranes enriched in phosphatidylinositol 4,5-bisphosphate and is required for location at the cell membrane (PubMed:23791178).</text>
</comment>
<comment type="domain">
    <text evidence="11">The SMP-LTD domain is a barrel-like domain that binds glycerophospholipids in its interior; can bind two lipid molecules simultaneously. Binds a variety of lipids, including phosphatidylethanolamine, phosphatidylcholine and phosphatidylinositol (PubMed:24847877).</text>
</comment>
<comment type="similarity">
    <text evidence="19">Belongs to the extended synaptotagmin family.</text>
</comment>
<comment type="sequence caution" evidence="19">
    <conflict type="erroneous initiation">
        <sequence resource="EMBL-CDS" id="BAA91539"/>
    </conflict>
    <text>Truncated N-terminus.</text>
</comment>
<comment type="sequence caution" evidence="19">
    <conflict type="frameshift">
        <sequence resource="EMBL-CDS" id="BAC85769"/>
    </conflict>
</comment>
<dbReference type="EMBL" id="DQ993201">
    <property type="protein sequence ID" value="ABJ97706.1"/>
    <property type="molecule type" value="mRNA"/>
</dbReference>
<dbReference type="EMBL" id="AY368150">
    <property type="protein sequence ID" value="AAR89381.1"/>
    <property type="molecule type" value="mRNA"/>
</dbReference>
<dbReference type="EMBL" id="AK001181">
    <property type="protein sequence ID" value="BAA91539.1"/>
    <property type="status" value="ALT_INIT"/>
    <property type="molecule type" value="mRNA"/>
</dbReference>
<dbReference type="EMBL" id="AK124091">
    <property type="protein sequence ID" value="BAC85769.1"/>
    <property type="status" value="ALT_FRAME"/>
    <property type="molecule type" value="mRNA"/>
</dbReference>
<dbReference type="EMBL" id="AK126214">
    <property type="protein sequence ID" value="BAC86489.1"/>
    <property type="molecule type" value="mRNA"/>
</dbReference>
<dbReference type="EMBL" id="CH236954">
    <property type="protein sequence ID" value="EAL23931.1"/>
    <property type="molecule type" value="Genomic_DNA"/>
</dbReference>
<dbReference type="EMBL" id="AB033054">
    <property type="protein sequence ID" value="BAA86542.2"/>
    <property type="molecule type" value="mRNA"/>
</dbReference>
<dbReference type="EMBL" id="AL833233">
    <property type="protein sequence ID" value="CAH10642.1"/>
    <property type="molecule type" value="mRNA"/>
</dbReference>
<dbReference type="EMBL" id="BC013957">
    <property type="protein sequence ID" value="AAH13957.2"/>
    <property type="molecule type" value="mRNA"/>
</dbReference>
<dbReference type="EMBL" id="AJ303365">
    <property type="protein sequence ID" value="CAC33887.1"/>
    <property type="molecule type" value="mRNA"/>
</dbReference>
<dbReference type="RefSeq" id="NP_065779.1">
    <property type="nucleotide sequence ID" value="NM_020728.2"/>
</dbReference>
<dbReference type="PDB" id="2DMG">
    <property type="method" value="NMR"/>
    <property type="chains" value="A=785-913"/>
</dbReference>
<dbReference type="PDB" id="4NPJ">
    <property type="method" value="X-ray"/>
    <property type="resolution" value="2.10 A"/>
    <property type="chains" value="A/B=363-660"/>
</dbReference>
<dbReference type="PDB" id="4NPK">
    <property type="method" value="X-ray"/>
    <property type="resolution" value="2.55 A"/>
    <property type="chains" value="A=363-660"/>
</dbReference>
<dbReference type="PDB" id="4P42">
    <property type="method" value="X-ray"/>
    <property type="resolution" value="2.44 A"/>
    <property type="chains" value="A/B=191-662"/>
</dbReference>
<dbReference type="PDBsum" id="2DMG"/>
<dbReference type="PDBsum" id="4NPJ"/>
<dbReference type="PDBsum" id="4NPK"/>
<dbReference type="PDBsum" id="4P42"/>
<dbReference type="SMR" id="A0FGR8"/>
<dbReference type="BioGRID" id="121556">
    <property type="interactions" value="399"/>
</dbReference>
<dbReference type="CORUM" id="A0FGR8"/>
<dbReference type="DIP" id="DIP-61039N"/>
<dbReference type="FunCoup" id="A0FGR8">
    <property type="interactions" value="2575"/>
</dbReference>
<dbReference type="IntAct" id="A0FGR8">
    <property type="interactions" value="112"/>
</dbReference>
<dbReference type="MINT" id="A0FGR8"/>
<dbReference type="STRING" id="9606.ENSP00000499020"/>
<dbReference type="TCDB" id="9.A.57.1.2">
    <property type="family name" value="the extended-synaptotagmin (e-syt) family"/>
</dbReference>
<dbReference type="GlyCosmos" id="A0FGR8">
    <property type="glycosylation" value="1 site, 1 glycan"/>
</dbReference>
<dbReference type="GlyGen" id="A0FGR8">
    <property type="glycosylation" value="2 sites, 1 O-linked glycan (1 site)"/>
</dbReference>
<dbReference type="iPTMnet" id="A0FGR8"/>
<dbReference type="PhosphoSitePlus" id="A0FGR8"/>
<dbReference type="SwissPalm" id="A0FGR8"/>
<dbReference type="BioMuta" id="ESYT2"/>
<dbReference type="jPOST" id="A0FGR8"/>
<dbReference type="MassIVE" id="A0FGR8"/>
<dbReference type="PaxDb" id="9606-ENSP00000251527"/>
<dbReference type="PeptideAtlas" id="A0FGR8"/>
<dbReference type="ProteomicsDB" id="30">
    <molecule id="A0FGR8-1"/>
</dbReference>
<dbReference type="ProteomicsDB" id="31">
    <molecule id="A0FGR8-2"/>
</dbReference>
<dbReference type="ProteomicsDB" id="32">
    <molecule id="A0FGR8-4"/>
</dbReference>
<dbReference type="ProteomicsDB" id="33">
    <molecule id="A0FGR8-5"/>
</dbReference>
<dbReference type="ProteomicsDB" id="34">
    <molecule id="A0FGR8-6"/>
</dbReference>
<dbReference type="Pumba" id="A0FGR8"/>
<dbReference type="Antibodypedia" id="950">
    <property type="antibodies" value="104 antibodies from 21 providers"/>
</dbReference>
<dbReference type="DNASU" id="57488"/>
<dbReference type="Ensembl" id="ENST00000652148.1">
    <molecule id="A0FGR8-2"/>
    <property type="protein sequence ID" value="ENSP00000499020.1"/>
    <property type="gene ID" value="ENSG00000117868.18"/>
</dbReference>
<dbReference type="GeneID" id="57488"/>
<dbReference type="KEGG" id="hsa:57488"/>
<dbReference type="UCSC" id="uc003wob.2">
    <molecule id="A0FGR8-1"/>
    <property type="organism name" value="human"/>
</dbReference>
<dbReference type="AGR" id="HGNC:22211"/>
<dbReference type="CTD" id="57488"/>
<dbReference type="DisGeNET" id="57488"/>
<dbReference type="GeneCards" id="ESYT2"/>
<dbReference type="HGNC" id="HGNC:22211">
    <property type="gene designation" value="ESYT2"/>
</dbReference>
<dbReference type="HPA" id="ENSG00000117868">
    <property type="expression patterns" value="Low tissue specificity"/>
</dbReference>
<dbReference type="neXtProt" id="NX_A0FGR8"/>
<dbReference type="OpenTargets" id="ENSG00000117868"/>
<dbReference type="PharmGKB" id="PA165617947"/>
<dbReference type="VEuPathDB" id="HostDB:ENSG00000117868"/>
<dbReference type="eggNOG" id="KOG1012">
    <property type="taxonomic scope" value="Eukaryota"/>
</dbReference>
<dbReference type="GeneTree" id="ENSGT00940000156086"/>
<dbReference type="InParanoid" id="A0FGR8"/>
<dbReference type="OrthoDB" id="1029639at2759"/>
<dbReference type="PAN-GO" id="A0FGR8">
    <property type="GO annotations" value="7 GO annotations based on evolutionary models"/>
</dbReference>
<dbReference type="PhylomeDB" id="A0FGR8"/>
<dbReference type="TreeFam" id="TF324255"/>
<dbReference type="PathwayCommons" id="A0FGR8"/>
<dbReference type="Reactome" id="R-HSA-9845576">
    <property type="pathway name" value="Glycosphingolipid transport"/>
</dbReference>
<dbReference type="SignaLink" id="A0FGR8"/>
<dbReference type="BioGRID-ORCS" id="57488">
    <property type="hits" value="16 hits in 1153 CRISPR screens"/>
</dbReference>
<dbReference type="CD-CODE" id="91857CE7">
    <property type="entry name" value="Nucleolus"/>
</dbReference>
<dbReference type="CD-CODE" id="FB4E32DD">
    <property type="entry name" value="Presynaptic clusters and postsynaptic densities"/>
</dbReference>
<dbReference type="ChiTaRS" id="ESYT2">
    <property type="organism name" value="human"/>
</dbReference>
<dbReference type="EvolutionaryTrace" id="A0FGR8"/>
<dbReference type="GeneWiki" id="FAM62B"/>
<dbReference type="GenomeRNAi" id="57488"/>
<dbReference type="Pharos" id="A0FGR8">
    <property type="development level" value="Tbio"/>
</dbReference>
<dbReference type="PRO" id="PR:A0FGR8"/>
<dbReference type="Proteomes" id="UP000005640">
    <property type="component" value="Chromosome 7"/>
</dbReference>
<dbReference type="RNAct" id="A0FGR8">
    <property type="molecule type" value="protein"/>
</dbReference>
<dbReference type="Bgee" id="ENSG00000117868">
    <property type="expression patterns" value="Expressed in layer of synovial tissue and 191 other cell types or tissues"/>
</dbReference>
<dbReference type="ExpressionAtlas" id="A0FGR8">
    <property type="expression patterns" value="baseline and differential"/>
</dbReference>
<dbReference type="GO" id="GO:0009898">
    <property type="term" value="C:cytoplasmic side of plasma membrane"/>
    <property type="evidence" value="ECO:0000315"/>
    <property type="project" value="UniProtKB"/>
</dbReference>
<dbReference type="GO" id="GO:0005829">
    <property type="term" value="C:cytosol"/>
    <property type="evidence" value="ECO:0000314"/>
    <property type="project" value="HPA"/>
</dbReference>
<dbReference type="GO" id="GO:0005789">
    <property type="term" value="C:endoplasmic reticulum membrane"/>
    <property type="evidence" value="ECO:0000314"/>
    <property type="project" value="UniProtKB"/>
</dbReference>
<dbReference type="GO" id="GO:0140268">
    <property type="term" value="C:endoplasmic reticulum-plasma membrane contact site"/>
    <property type="evidence" value="ECO:0000314"/>
    <property type="project" value="UniProtKB"/>
</dbReference>
<dbReference type="GO" id="GO:0016020">
    <property type="term" value="C:membrane"/>
    <property type="evidence" value="ECO:0007005"/>
    <property type="project" value="UniProtKB"/>
</dbReference>
<dbReference type="GO" id="GO:0044232">
    <property type="term" value="C:organelle membrane contact site"/>
    <property type="evidence" value="ECO:0000314"/>
    <property type="project" value="UniProtKB"/>
</dbReference>
<dbReference type="GO" id="GO:0005886">
    <property type="term" value="C:plasma membrane"/>
    <property type="evidence" value="ECO:0000314"/>
    <property type="project" value="HPA"/>
</dbReference>
<dbReference type="GO" id="GO:0045296">
    <property type="term" value="F:cadherin binding"/>
    <property type="evidence" value="ECO:0007005"/>
    <property type="project" value="BHF-UCL"/>
</dbReference>
<dbReference type="GO" id="GO:0005509">
    <property type="term" value="F:calcium ion binding"/>
    <property type="evidence" value="ECO:0000314"/>
    <property type="project" value="UniProtKB"/>
</dbReference>
<dbReference type="GO" id="GO:0005544">
    <property type="term" value="F:calcium-dependent phospholipid binding"/>
    <property type="evidence" value="ECO:0000314"/>
    <property type="project" value="FlyBase"/>
</dbReference>
<dbReference type="GO" id="GO:0042802">
    <property type="term" value="F:identical protein binding"/>
    <property type="evidence" value="ECO:0000353"/>
    <property type="project" value="IntAct"/>
</dbReference>
<dbReference type="GO" id="GO:0031210">
    <property type="term" value="F:phosphatidylcholine binding"/>
    <property type="evidence" value="ECO:0000314"/>
    <property type="project" value="UniProtKB"/>
</dbReference>
<dbReference type="GO" id="GO:0008429">
    <property type="term" value="F:phosphatidylethanolamine binding"/>
    <property type="evidence" value="ECO:0000314"/>
    <property type="project" value="UniProtKB"/>
</dbReference>
<dbReference type="GO" id="GO:0035091">
    <property type="term" value="F:phosphatidylinositol binding"/>
    <property type="evidence" value="ECO:0000314"/>
    <property type="project" value="UniProtKB"/>
</dbReference>
<dbReference type="GO" id="GO:0006897">
    <property type="term" value="P:endocytosis"/>
    <property type="evidence" value="ECO:0007669"/>
    <property type="project" value="UniProtKB-KW"/>
</dbReference>
<dbReference type="GO" id="GO:0061817">
    <property type="term" value="P:endoplasmic reticulum-plasma membrane tethering"/>
    <property type="evidence" value="ECO:0007669"/>
    <property type="project" value="InterPro"/>
</dbReference>
<dbReference type="GO" id="GO:0006869">
    <property type="term" value="P:lipid transport"/>
    <property type="evidence" value="ECO:0007669"/>
    <property type="project" value="UniProtKB-KW"/>
</dbReference>
<dbReference type="CDD" id="cd08391">
    <property type="entry name" value="C2A_C2C_Synaptotagmin_like"/>
    <property type="match status" value="1"/>
</dbReference>
<dbReference type="CDD" id="cd04050">
    <property type="entry name" value="C2B_Synaptotagmin-like"/>
    <property type="match status" value="1"/>
</dbReference>
<dbReference type="CDD" id="cd04030">
    <property type="entry name" value="C2C_KIAA1228"/>
    <property type="match status" value="1"/>
</dbReference>
<dbReference type="CDD" id="cd21680">
    <property type="entry name" value="SMP_ESyt2"/>
    <property type="match status" value="1"/>
</dbReference>
<dbReference type="FunFam" id="2.60.40.150:FF:000025">
    <property type="entry name" value="Extended synaptotagmin 2"/>
    <property type="match status" value="1"/>
</dbReference>
<dbReference type="FunFam" id="2.60.40.150:FF:000078">
    <property type="entry name" value="Extended synaptotagmin 2"/>
    <property type="match status" value="1"/>
</dbReference>
<dbReference type="FunFam" id="2.60.40.150:FF:000091">
    <property type="entry name" value="Extended synaptotagmin 2"/>
    <property type="match status" value="1"/>
</dbReference>
<dbReference type="Gene3D" id="2.60.40.150">
    <property type="entry name" value="C2 domain"/>
    <property type="match status" value="3"/>
</dbReference>
<dbReference type="InterPro" id="IPR000008">
    <property type="entry name" value="C2_dom"/>
</dbReference>
<dbReference type="InterPro" id="IPR035892">
    <property type="entry name" value="C2_domain_sf"/>
</dbReference>
<dbReference type="InterPro" id="IPR037752">
    <property type="entry name" value="C2C_KIAA1228"/>
</dbReference>
<dbReference type="InterPro" id="IPR037733">
    <property type="entry name" value="Ext_Synaptotagmin_C2A"/>
</dbReference>
<dbReference type="InterPro" id="IPR037749">
    <property type="entry name" value="Ext_Synaptotagmin_C2B"/>
</dbReference>
<dbReference type="InterPro" id="IPR051634">
    <property type="entry name" value="Extended_Synaptotagmin"/>
</dbReference>
<dbReference type="InterPro" id="IPR031468">
    <property type="entry name" value="SMP_LBD"/>
</dbReference>
<dbReference type="InterPro" id="IPR039010">
    <property type="entry name" value="Synaptotagmin_SMP"/>
</dbReference>
<dbReference type="PANTHER" id="PTHR45761:SF2">
    <property type="entry name" value="EXTENDED SYNAPTOTAGMIN-2"/>
    <property type="match status" value="1"/>
</dbReference>
<dbReference type="PANTHER" id="PTHR45761">
    <property type="entry name" value="EXTENDED SYNAPTOTAGMIN-LIKE PROTEIN 2, ISOFORM C"/>
    <property type="match status" value="1"/>
</dbReference>
<dbReference type="Pfam" id="PF00168">
    <property type="entry name" value="C2"/>
    <property type="match status" value="3"/>
</dbReference>
<dbReference type="Pfam" id="PF17047">
    <property type="entry name" value="SMP_LBD"/>
    <property type="match status" value="1"/>
</dbReference>
<dbReference type="SMART" id="SM00239">
    <property type="entry name" value="C2"/>
    <property type="match status" value="3"/>
</dbReference>
<dbReference type="SUPFAM" id="SSF49562">
    <property type="entry name" value="C2 domain (Calcium/lipid-binding domain, CaLB)"/>
    <property type="match status" value="3"/>
</dbReference>
<dbReference type="PROSITE" id="PS50004">
    <property type="entry name" value="C2"/>
    <property type="match status" value="3"/>
</dbReference>
<dbReference type="PROSITE" id="PS51847">
    <property type="entry name" value="SMP"/>
    <property type="match status" value="1"/>
</dbReference>
<feature type="chain" id="PRO_0000278258" description="Extended synaptotagmin-2">
    <location>
        <begin position="1"/>
        <end position="921"/>
    </location>
</feature>
<feature type="topological domain" description="Cytoplasmic" evidence="2">
    <location>
        <begin position="1"/>
        <end position="103"/>
    </location>
</feature>
<feature type="transmembrane region" description="Helical" evidence="2">
    <location>
        <begin position="104"/>
        <end position="124"/>
    </location>
</feature>
<feature type="topological domain" description="Lumenal" evidence="2">
    <location>
        <begin position="125"/>
        <end position="127"/>
    </location>
</feature>
<feature type="transmembrane region" description="Helical" evidence="2">
    <location>
        <begin position="128"/>
        <end position="148"/>
    </location>
</feature>
<feature type="topological domain" description="Cytoplasmic" evidence="2">
    <location>
        <begin position="149"/>
        <end position="921"/>
    </location>
</feature>
<feature type="domain" description="SMP-LTD" evidence="4 11">
    <location>
        <begin position="191"/>
        <end position="370"/>
    </location>
</feature>
<feature type="domain" description="C2 1" evidence="3">
    <location>
        <begin position="369"/>
        <end position="489"/>
    </location>
</feature>
<feature type="domain" description="C2 2" evidence="3">
    <location>
        <begin position="514"/>
        <end position="639"/>
    </location>
</feature>
<feature type="domain" description="C2 3" evidence="3">
    <location>
        <begin position="786"/>
        <end position="908"/>
    </location>
</feature>
<feature type="region of interest" description="Disordered" evidence="5">
    <location>
        <begin position="1"/>
        <end position="103"/>
    </location>
</feature>
<feature type="region of interest" description="Disordered" evidence="5">
    <location>
        <begin position="660"/>
        <end position="754"/>
    </location>
</feature>
<feature type="region of interest" description="Required for phosphatidylinositol 4,5-bisphosphate-dependent location at the cell membrane">
    <location>
        <begin position="833"/>
        <end position="840"/>
    </location>
</feature>
<feature type="compositionally biased region" description="Basic residues" evidence="5">
    <location>
        <begin position="58"/>
        <end position="75"/>
    </location>
</feature>
<feature type="binding site" evidence="10">
    <location>
        <position position="400"/>
    </location>
    <ligand>
        <name>Ca(2+)</name>
        <dbReference type="ChEBI" id="CHEBI:29108"/>
        <label>1</label>
    </ligand>
</feature>
<feature type="binding site" evidence="10">
    <location>
        <position position="401"/>
    </location>
    <ligand>
        <name>Ca(2+)</name>
        <dbReference type="ChEBI" id="CHEBI:29108"/>
        <label>1</label>
    </ligand>
</feature>
<feature type="binding site" evidence="10">
    <location>
        <position position="401"/>
    </location>
    <ligand>
        <name>Ca(2+)</name>
        <dbReference type="ChEBI" id="CHEBI:29108"/>
        <label>2</label>
    </ligand>
</feature>
<feature type="binding site" evidence="10">
    <location>
        <position position="413"/>
    </location>
    <ligand>
        <name>Ca(2+)</name>
        <dbReference type="ChEBI" id="CHEBI:29108"/>
        <label>2</label>
    </ligand>
</feature>
<feature type="binding site" evidence="10">
    <location>
        <position position="460"/>
    </location>
    <ligand>
        <name>Ca(2+)</name>
        <dbReference type="ChEBI" id="CHEBI:29108"/>
        <label>1</label>
    </ligand>
</feature>
<feature type="binding site" evidence="10">
    <location>
        <position position="460"/>
    </location>
    <ligand>
        <name>Ca(2+)</name>
        <dbReference type="ChEBI" id="CHEBI:29108"/>
        <label>2</label>
    </ligand>
</feature>
<feature type="binding site" evidence="10">
    <location>
        <position position="461"/>
    </location>
    <ligand>
        <name>Ca(2+)</name>
        <dbReference type="ChEBI" id="CHEBI:29108"/>
        <label>2</label>
    </ligand>
</feature>
<feature type="binding site" evidence="10">
    <location>
        <position position="462"/>
    </location>
    <ligand>
        <name>Ca(2+)</name>
        <dbReference type="ChEBI" id="CHEBI:29108"/>
        <label>1</label>
    </ligand>
</feature>
<feature type="binding site" evidence="10">
    <location>
        <position position="462"/>
    </location>
    <ligand>
        <name>Ca(2+)</name>
        <dbReference type="ChEBI" id="CHEBI:29108"/>
        <label>2</label>
    </ligand>
</feature>
<feature type="binding site" evidence="10">
    <location>
        <position position="462"/>
    </location>
    <ligand>
        <name>Ca(2+)</name>
        <dbReference type="ChEBI" id="CHEBI:29108"/>
        <label>3</label>
    </ligand>
</feature>
<feature type="binding site" evidence="10">
    <location>
        <position position="464"/>
    </location>
    <ligand>
        <name>Ca(2+)</name>
        <dbReference type="ChEBI" id="CHEBI:29108"/>
        <label>3</label>
    </ligand>
</feature>
<feature type="binding site" evidence="10">
    <location>
        <position position="466"/>
    </location>
    <ligand>
        <name>Ca(2+)</name>
        <dbReference type="ChEBI" id="CHEBI:29108"/>
        <label>3</label>
    </ligand>
</feature>
<feature type="binding site" evidence="10">
    <location>
        <position position="467"/>
    </location>
    <ligand>
        <name>Ca(2+)</name>
        <dbReference type="ChEBI" id="CHEBI:29108"/>
        <label>1</label>
    </ligand>
</feature>
<feature type="modified residue" description="Phosphoserine" evidence="24 27">
    <location>
        <position position="691"/>
    </location>
</feature>
<feature type="modified residue" description="Phosphoserine" evidence="28">
    <location>
        <position position="693"/>
    </location>
</feature>
<feature type="modified residue" description="Phosphothreonine" evidence="28">
    <location>
        <position position="705"/>
    </location>
</feature>
<feature type="modified residue" description="Phosphoserine" evidence="27">
    <location>
        <position position="736"/>
    </location>
</feature>
<feature type="modified residue" description="Phosphoserine" evidence="1">
    <location>
        <position position="738"/>
    </location>
</feature>
<feature type="modified residue" description="Phosphoserine" evidence="24 27">
    <location>
        <position position="739"/>
    </location>
</feature>
<feature type="modified residue" description="Phosphoserine" evidence="21 22 23 25 27">
    <location>
        <position position="743"/>
    </location>
</feature>
<feature type="modified residue" description="Phosphoserine" evidence="24">
    <location>
        <position position="748"/>
    </location>
</feature>
<feature type="modified residue" description="Phosphoserine" evidence="22 24">
    <location>
        <position position="755"/>
    </location>
</feature>
<feature type="modified residue" description="Phosphoserine" evidence="22 23 24 25 26">
    <location>
        <position position="758"/>
    </location>
</feature>
<feature type="modified residue" description="Phosphoserine" evidence="22 23 24 25 26 27 28">
    <location>
        <position position="761"/>
    </location>
</feature>
<feature type="splice variant" id="VSP_023236" description="In isoform 5." evidence="15">
    <location>
        <begin position="1"/>
        <end position="593"/>
    </location>
</feature>
<feature type="splice variant" id="VSP_023238" description="In isoform 4." evidence="15">
    <location>
        <begin position="1"/>
        <end position="204"/>
    </location>
</feature>
<feature type="splice variant" id="VSP_023239" description="In isoform 2." evidence="18">
    <original>MTANRDAALSSHRHPGCAQRPRTPTFASSSQRRSAFGFDDGNFPGLGERSHAPGSRLGARRRAKTARGLRGHRQRGAGAGLSRPGSARAPSPPRPGG</original>
    <variation>MTPPSRAEAGVRRSRVPSEGRWRGAEPPGISASTQPASAGRAARHCGAMSGARGEGPEAGAGGAGGRAA</variation>
    <location>
        <begin position="1"/>
        <end position="97"/>
    </location>
</feature>
<feature type="splice variant" id="VSP_038324" description="In isoform 6." evidence="16">
    <original>S</original>
    <variation>SNPLEFNPDVLKKTAVQRALKS</variation>
    <location>
        <position position="550"/>
    </location>
</feature>
<feature type="splice variant" id="VSP_023240" description="In isoform 5." evidence="15">
    <original>NPKRQDLEVE</original>
    <variation>MPVLPPCVLQ</variation>
    <location>
        <begin position="594"/>
        <end position="603"/>
    </location>
</feature>
<feature type="splice variant" id="VSP_023241" description="In isoform 4." evidence="15">
    <original>PVIGGSDKPGMEEKAQPPEAGPQGLH</original>
    <variation>SQSRSRPPASPRTSRCPSPPRSCGKG</variation>
    <location>
        <begin position="706"/>
        <end position="731"/>
    </location>
</feature>
<feature type="splice variant" id="VSP_023242" description="In isoform 4." evidence="15">
    <location>
        <begin position="732"/>
        <end position="921"/>
    </location>
</feature>
<feature type="sequence variant" id="VAR_030725" description="In dbSNP:rs13233513.">
    <original>C</original>
    <variation>S</variation>
    <location>
        <position position="210"/>
    </location>
</feature>
<feature type="sequence variant" id="VAR_030726" description="In dbSNP:rs2305473." evidence="6">
    <original>S</original>
    <variation>G</variation>
    <location>
        <position position="638"/>
    </location>
</feature>
<feature type="mutagenesis site" description="Abolishes calcium binding; when associated with A-413." evidence="10">
    <original>D</original>
    <variation>A</variation>
    <location>
        <position position="401"/>
    </location>
</feature>
<feature type="mutagenesis site" description="Abolishes calcium binding; when associated with A-401." evidence="10">
    <original>D</original>
    <variation>A</variation>
    <location>
        <position position="413"/>
    </location>
</feature>
<feature type="mutagenesis site" description="Strongly reduces calcium binding." evidence="10">
    <original>D</original>
    <variation>N</variation>
    <location>
        <position position="413"/>
    </location>
</feature>
<feature type="mutagenesis site" description="Impairs binding of the third calcium ion, but has no effect on the binding of the other two calcium ions." evidence="10">
    <original>D</original>
    <variation>A</variation>
    <location>
        <position position="466"/>
    </location>
</feature>
<feature type="mutagenesis site" description="Abolishes location at the cell membrane." evidence="9">
    <original>KRRSGRRK</original>
    <variation>AAASGAAA</variation>
    <location>
        <begin position="833"/>
        <end position="840"/>
    </location>
</feature>
<feature type="sequence conflict" description="In Ref. 7; CAH10642." evidence="19" ref="7">
    <original>L</original>
    <variation>V</variation>
    <location>
        <position position="141"/>
    </location>
</feature>
<feature type="sequence conflict" description="In Ref. 3; BAC85769." evidence="19" ref="3">
    <original>S</original>
    <variation>P</variation>
    <location>
        <position position="612"/>
    </location>
</feature>
<feature type="sequence conflict" description="In Ref. 3; BAC86489." evidence="19" ref="3">
    <original>N</original>
    <variation>S</variation>
    <location>
        <position position="615"/>
    </location>
</feature>
<feature type="sequence conflict" description="In Ref. 3; BAC85769." evidence="19" ref="3">
    <original>R</original>
    <variation>Q</variation>
    <location>
        <position position="795"/>
    </location>
</feature>
<feature type="helix" evidence="31">
    <location>
        <begin position="196"/>
        <end position="219"/>
    </location>
</feature>
<feature type="helix" evidence="31">
    <location>
        <begin position="221"/>
        <end position="226"/>
    </location>
</feature>
<feature type="helix" evidence="31">
    <location>
        <begin position="230"/>
        <end position="232"/>
    </location>
</feature>
<feature type="strand" evidence="31">
    <location>
        <begin position="235"/>
        <end position="241"/>
    </location>
</feature>
<feature type="strand" evidence="31">
    <location>
        <begin position="248"/>
        <end position="255"/>
    </location>
</feature>
<feature type="strand" evidence="31">
    <location>
        <begin position="264"/>
        <end position="282"/>
    </location>
</feature>
<feature type="turn" evidence="31">
    <location>
        <begin position="283"/>
        <end position="286"/>
    </location>
</feature>
<feature type="strand" evidence="31">
    <location>
        <begin position="287"/>
        <end position="304"/>
    </location>
</feature>
<feature type="strand" evidence="31">
    <location>
        <begin position="316"/>
        <end position="323"/>
    </location>
</feature>
<feature type="strand" evidence="31">
    <location>
        <begin position="326"/>
        <end position="333"/>
    </location>
</feature>
<feature type="helix" evidence="31">
    <location>
        <begin position="334"/>
        <end position="337"/>
    </location>
</feature>
<feature type="turn" evidence="31">
    <location>
        <begin position="341"/>
        <end position="345"/>
    </location>
</feature>
<feature type="helix" evidence="31">
    <location>
        <begin position="348"/>
        <end position="358"/>
    </location>
</feature>
<feature type="strand" evidence="31">
    <location>
        <begin position="365"/>
        <end position="370"/>
    </location>
</feature>
<feature type="helix" evidence="31">
    <location>
        <begin position="372"/>
        <end position="379"/>
    </location>
</feature>
<feature type="strand" evidence="30">
    <location>
        <begin position="384"/>
        <end position="396"/>
    </location>
</feature>
<feature type="turn" evidence="31">
    <location>
        <begin position="405"/>
        <end position="407"/>
    </location>
</feature>
<feature type="strand" evidence="30">
    <location>
        <begin position="414"/>
        <end position="420"/>
    </location>
</feature>
<feature type="strand" evidence="30">
    <location>
        <begin position="423"/>
        <end position="426"/>
    </location>
</feature>
<feature type="strand" evidence="30">
    <location>
        <begin position="437"/>
        <end position="446"/>
    </location>
</feature>
<feature type="strand" evidence="30">
    <location>
        <begin position="453"/>
        <end position="460"/>
    </location>
</feature>
<feature type="strand" evidence="30">
    <location>
        <begin position="463"/>
        <end position="465"/>
    </location>
</feature>
<feature type="strand" evidence="30">
    <location>
        <begin position="467"/>
        <end position="475"/>
    </location>
</feature>
<feature type="helix" evidence="30">
    <location>
        <begin position="476"/>
        <end position="482"/>
    </location>
</feature>
<feature type="strand" evidence="30">
    <location>
        <begin position="483"/>
        <end position="490"/>
    </location>
</feature>
<feature type="strand" evidence="30">
    <location>
        <begin position="494"/>
        <end position="496"/>
    </location>
</feature>
<feature type="strand" evidence="30">
    <location>
        <begin position="498"/>
        <end position="512"/>
    </location>
</feature>
<feature type="helix" evidence="30">
    <location>
        <begin position="515"/>
        <end position="524"/>
    </location>
</feature>
<feature type="strand" evidence="30">
    <location>
        <begin position="535"/>
        <end position="547"/>
    </location>
</feature>
<feature type="strand" evidence="31">
    <location>
        <begin position="552"/>
        <end position="554"/>
    </location>
</feature>
<feature type="strand" evidence="30">
    <location>
        <begin position="560"/>
        <end position="566"/>
    </location>
</feature>
<feature type="strand" evidence="30">
    <location>
        <begin position="569"/>
        <end position="572"/>
    </location>
</feature>
<feature type="strand" evidence="30">
    <location>
        <begin position="583"/>
        <end position="593"/>
    </location>
</feature>
<feature type="turn" evidence="30">
    <location>
        <begin position="595"/>
        <end position="597"/>
    </location>
</feature>
<feature type="strand" evidence="30">
    <location>
        <begin position="599"/>
        <end position="606"/>
    </location>
</feature>
<feature type="turn" evidence="30">
    <location>
        <begin position="607"/>
        <end position="609"/>
    </location>
</feature>
<feature type="strand" evidence="30">
    <location>
        <begin position="612"/>
        <end position="619"/>
    </location>
</feature>
<feature type="helix" evidence="30">
    <location>
        <begin position="621"/>
        <end position="624"/>
    </location>
</feature>
<feature type="helix" evidence="30">
    <location>
        <begin position="627"/>
        <end position="629"/>
    </location>
</feature>
<feature type="strand" evidence="30">
    <location>
        <begin position="630"/>
        <end position="636"/>
    </location>
</feature>
<feature type="strand" evidence="30">
    <location>
        <begin position="638"/>
        <end position="640"/>
    </location>
</feature>
<feature type="strand" evidence="30">
    <location>
        <begin position="645"/>
        <end position="656"/>
    </location>
</feature>
<feature type="strand" evidence="29">
    <location>
        <begin position="789"/>
        <end position="797"/>
    </location>
</feature>
<feature type="turn" evidence="29">
    <location>
        <begin position="798"/>
        <end position="801"/>
    </location>
</feature>
<feature type="strand" evidence="29">
    <location>
        <begin position="802"/>
        <end position="811"/>
    </location>
</feature>
<feature type="strand" evidence="29">
    <location>
        <begin position="823"/>
        <end position="831"/>
    </location>
</feature>
<feature type="strand" evidence="29">
    <location>
        <begin position="835"/>
        <end position="837"/>
    </location>
</feature>
<feature type="strand" evidence="29">
    <location>
        <begin position="851"/>
        <end position="858"/>
    </location>
</feature>
<feature type="helix" evidence="29">
    <location>
        <begin position="862"/>
        <end position="867"/>
    </location>
</feature>
<feature type="strand" evidence="29">
    <location>
        <begin position="869"/>
        <end position="876"/>
    </location>
</feature>
<feature type="strand" evidence="29">
    <location>
        <begin position="889"/>
        <end position="894"/>
    </location>
</feature>
<feature type="turn" evidence="29">
    <location>
        <begin position="899"/>
        <end position="902"/>
    </location>
</feature>
<accession>A0FGR8</accession>
<accession>A4D229</accession>
<accession>Q69YJ2</accession>
<accession>Q6UKI4</accession>
<accession>Q6ZTU0</accession>
<accession>Q6ZVU1</accession>
<accession>Q9BQS0</accession>
<accession>Q9NW47</accession>
<accession>Q9ULJ2</accession>
<keyword id="KW-0002">3D-structure</keyword>
<keyword id="KW-0025">Alternative splicing</keyword>
<keyword id="KW-0106">Calcium</keyword>
<keyword id="KW-1003">Cell membrane</keyword>
<keyword id="KW-0254">Endocytosis</keyword>
<keyword id="KW-0256">Endoplasmic reticulum</keyword>
<keyword id="KW-0445">Lipid transport</keyword>
<keyword id="KW-0446">Lipid-binding</keyword>
<keyword id="KW-0472">Membrane</keyword>
<keyword id="KW-0479">Metal-binding</keyword>
<keyword id="KW-0597">Phosphoprotein</keyword>
<keyword id="KW-1267">Proteomics identification</keyword>
<keyword id="KW-1185">Reference proteome</keyword>
<keyword id="KW-0677">Repeat</keyword>
<keyword id="KW-0812">Transmembrane</keyword>
<keyword id="KW-1133">Transmembrane helix</keyword>
<keyword id="KW-0813">Transport</keyword>
<evidence type="ECO:0000250" key="1">
    <source>
        <dbReference type="UniProtKB" id="Q3TZZ7"/>
    </source>
</evidence>
<evidence type="ECO:0000255" key="2"/>
<evidence type="ECO:0000255" key="3">
    <source>
        <dbReference type="PROSITE-ProRule" id="PRU00041"/>
    </source>
</evidence>
<evidence type="ECO:0000255" key="4">
    <source>
        <dbReference type="PROSITE-ProRule" id="PRU01194"/>
    </source>
</evidence>
<evidence type="ECO:0000256" key="5">
    <source>
        <dbReference type="SAM" id="MobiDB-lite"/>
    </source>
</evidence>
<evidence type="ECO:0000269" key="6">
    <source>
    </source>
</evidence>
<evidence type="ECO:0000269" key="7">
    <source>
    </source>
</evidence>
<evidence type="ECO:0000269" key="8">
    <source>
    </source>
</evidence>
<evidence type="ECO:0000269" key="9">
    <source>
    </source>
</evidence>
<evidence type="ECO:0000269" key="10">
    <source>
    </source>
</evidence>
<evidence type="ECO:0000269" key="11">
    <source>
    </source>
</evidence>
<evidence type="ECO:0000269" key="12">
    <source>
    </source>
</evidence>
<evidence type="ECO:0000269" key="13">
    <source>
    </source>
</evidence>
<evidence type="ECO:0000269" key="14">
    <source>
    </source>
</evidence>
<evidence type="ECO:0000303" key="15">
    <source>
    </source>
</evidence>
<evidence type="ECO:0000303" key="16">
    <source>
    </source>
</evidence>
<evidence type="ECO:0000303" key="17">
    <source>
    </source>
</evidence>
<evidence type="ECO:0000303" key="18">
    <source ref="2"/>
</evidence>
<evidence type="ECO:0000305" key="19"/>
<evidence type="ECO:0000312" key="20">
    <source>
        <dbReference type="HGNC" id="HGNC:22211"/>
    </source>
</evidence>
<evidence type="ECO:0007744" key="21">
    <source>
    </source>
</evidence>
<evidence type="ECO:0007744" key="22">
    <source>
    </source>
</evidence>
<evidence type="ECO:0007744" key="23">
    <source>
    </source>
</evidence>
<evidence type="ECO:0007744" key="24">
    <source>
    </source>
</evidence>
<evidence type="ECO:0007744" key="25">
    <source>
    </source>
</evidence>
<evidence type="ECO:0007744" key="26">
    <source>
    </source>
</evidence>
<evidence type="ECO:0007744" key="27">
    <source>
    </source>
</evidence>
<evidence type="ECO:0007744" key="28">
    <source>
    </source>
</evidence>
<evidence type="ECO:0007829" key="29">
    <source>
        <dbReference type="PDB" id="2DMG"/>
    </source>
</evidence>
<evidence type="ECO:0007829" key="30">
    <source>
        <dbReference type="PDB" id="4NPJ"/>
    </source>
</evidence>
<evidence type="ECO:0007829" key="31">
    <source>
        <dbReference type="PDB" id="4P42"/>
    </source>
</evidence>
<protein>
    <recommendedName>
        <fullName evidence="19">Extended synaptotagmin-2</fullName>
        <shortName evidence="17">E-Syt2</shortName>
    </recommendedName>
    <alternativeName>
        <fullName>Chr2Syt</fullName>
    </alternativeName>
</protein>
<sequence>MTANRDAALSSHRHPGCAQRPRTPTFASSSQRRSAFGFDDGNFPGLGERSHAPGSRLGARRRAKTARGLRGHRQRGAGAGLSRPGSARAPSPPRPGGPENPGGVLSVELPGLLAQLARSFALLLPVYALGYLGLSFSWVLLALALLAWCRRSRGLKALRLCRALALLEDEERVVRLGVRACDLPAWVHFPDTERAEWLNKTVKHMWPFICQFIEKLFRETIEPAVRGANTHLSTFSFTKVDVGQQPLRINGVKVYTENVDKRQIILDLQISFVGNCEIDLEIKRYFCRAGVKSIQIHGTMRVILEPLIGDMPLVGALSIFFLRKPLLEINWTGLTNLLDVPGLNGLSDTIILDIISNYLVLPNRITVPLVSEVQIAQLRFPVPKGVLRIHFIEAQDLQGKDTYLKGLVKGKSDPYGIIRVGNQIFQSRVIKENLSPKWNEVYEALVYEHPGQELEIELFDEDPDKDDFLGSLMIDLIEVEKERLLDEWFTLDEVPKGKLHLRLEWLTLMPNASNLDKVLTDIKADKDQANDGLSSALLILYLDSARNLPSGKKISSNPNPVVQMSVGHKAQESKIRYKTNEPVWEENFTFFIHNPKRQDLEVEVRDEQHQCSLGNLKVPLSQLLTSEDMTVSQRFQLSNSGPNSTIKMKIALRVLHLEKRERPPDHQHSAQVKRPSVSKEGRKTSIKSHMSGSPGPGGSNTAPSTPVIGGSDKPGMEEKAQPPEAGPQGLHDLGRSSSSLLASPGHISVKEPTPSIASDISLPIATQELRQRLRQLENGTTLGQSPLGQIQLTIRHSSQRNKLIVVVHACRNLIAFSEDGSDPYVRMYLLPDKRRSGRRKTHVSKKTLNPVFDQSFDFSVSLPEVQRRTLDVAVKNSGGFLSKDKGLLGKVLVALASEELAKGWTQWYDLTEDGTRPQAMT</sequence>
<name>ESYT2_HUMAN</name>
<proteinExistence type="evidence at protein level"/>
<reference key="1">
    <citation type="journal article" date="2007" name="Proc. Natl. Acad. Sci. U.S.A.">
        <title>E-Syts, a family of membranous Ca2+-sensor proteins with multiple C2 domains.</title>
        <authorList>
            <person name="Min S.-W."/>
            <person name="Chang W.-P."/>
            <person name="Suedhof T.C."/>
        </authorList>
    </citation>
    <scope>NUCLEOTIDE SEQUENCE [MRNA] (ISOFORM 1)</scope>
    <scope>FUNCTION</scope>
    <scope>SUBCELLULAR LOCATION</scope>
    <scope>CALCIUM-DEPENDENT LIPID-BINDING</scope>
    <scope>TISSUE SPECIFICITY</scope>
</reference>
<reference key="2">
    <citation type="submission" date="2003-08" db="EMBL/GenBank/DDBJ databases">
        <authorList>
            <person name="Shan Y.X."/>
            <person name="Yu L."/>
        </authorList>
    </citation>
    <scope>NUCLEOTIDE SEQUENCE [LARGE SCALE MRNA] (ISOFORM 2)</scope>
</reference>
<reference key="3">
    <citation type="journal article" date="2004" name="Nat. Genet.">
        <title>Complete sequencing and characterization of 21,243 full-length human cDNAs.</title>
        <authorList>
            <person name="Ota T."/>
            <person name="Suzuki Y."/>
            <person name="Nishikawa T."/>
            <person name="Otsuki T."/>
            <person name="Sugiyama T."/>
            <person name="Irie R."/>
            <person name="Wakamatsu A."/>
            <person name="Hayashi K."/>
            <person name="Sato H."/>
            <person name="Nagai K."/>
            <person name="Kimura K."/>
            <person name="Makita H."/>
            <person name="Sekine M."/>
            <person name="Obayashi M."/>
            <person name="Nishi T."/>
            <person name="Shibahara T."/>
            <person name="Tanaka T."/>
            <person name="Ishii S."/>
            <person name="Yamamoto J."/>
            <person name="Saito K."/>
            <person name="Kawai Y."/>
            <person name="Isono Y."/>
            <person name="Nakamura Y."/>
            <person name="Nagahari K."/>
            <person name="Murakami K."/>
            <person name="Yasuda T."/>
            <person name="Iwayanagi T."/>
            <person name="Wagatsuma M."/>
            <person name="Shiratori A."/>
            <person name="Sudo H."/>
            <person name="Hosoiri T."/>
            <person name="Kaku Y."/>
            <person name="Kodaira H."/>
            <person name="Kondo H."/>
            <person name="Sugawara M."/>
            <person name="Takahashi M."/>
            <person name="Kanda K."/>
            <person name="Yokoi T."/>
            <person name="Furuya T."/>
            <person name="Kikkawa E."/>
            <person name="Omura Y."/>
            <person name="Abe K."/>
            <person name="Kamihara K."/>
            <person name="Katsuta N."/>
            <person name="Sato K."/>
            <person name="Tanikawa M."/>
            <person name="Yamazaki M."/>
            <person name="Ninomiya K."/>
            <person name="Ishibashi T."/>
            <person name="Yamashita H."/>
            <person name="Murakawa K."/>
            <person name="Fujimori K."/>
            <person name="Tanai H."/>
            <person name="Kimata M."/>
            <person name="Watanabe M."/>
            <person name="Hiraoka S."/>
            <person name="Chiba Y."/>
            <person name="Ishida S."/>
            <person name="Ono Y."/>
            <person name="Takiguchi S."/>
            <person name="Watanabe S."/>
            <person name="Yosida M."/>
            <person name="Hotuta T."/>
            <person name="Kusano J."/>
            <person name="Kanehori K."/>
            <person name="Takahashi-Fujii A."/>
            <person name="Hara H."/>
            <person name="Tanase T.-O."/>
            <person name="Nomura Y."/>
            <person name="Togiya S."/>
            <person name="Komai F."/>
            <person name="Hara R."/>
            <person name="Takeuchi K."/>
            <person name="Arita M."/>
            <person name="Imose N."/>
            <person name="Musashino K."/>
            <person name="Yuuki H."/>
            <person name="Oshima A."/>
            <person name="Sasaki N."/>
            <person name="Aotsuka S."/>
            <person name="Yoshikawa Y."/>
            <person name="Matsunawa H."/>
            <person name="Ichihara T."/>
            <person name="Shiohata N."/>
            <person name="Sano S."/>
            <person name="Moriya S."/>
            <person name="Momiyama H."/>
            <person name="Satoh N."/>
            <person name="Takami S."/>
            <person name="Terashima Y."/>
            <person name="Suzuki O."/>
            <person name="Nakagawa S."/>
            <person name="Senoh A."/>
            <person name="Mizoguchi H."/>
            <person name="Goto Y."/>
            <person name="Shimizu F."/>
            <person name="Wakebe H."/>
            <person name="Hishigaki H."/>
            <person name="Watanabe T."/>
            <person name="Sugiyama A."/>
            <person name="Takemoto M."/>
            <person name="Kawakami B."/>
            <person name="Yamazaki M."/>
            <person name="Watanabe K."/>
            <person name="Kumagai A."/>
            <person name="Itakura S."/>
            <person name="Fukuzumi Y."/>
            <person name="Fujimori Y."/>
            <person name="Komiyama M."/>
            <person name="Tashiro H."/>
            <person name="Tanigami A."/>
            <person name="Fujiwara T."/>
            <person name="Ono T."/>
            <person name="Yamada K."/>
            <person name="Fujii Y."/>
            <person name="Ozaki K."/>
            <person name="Hirao M."/>
            <person name="Ohmori Y."/>
            <person name="Kawabata A."/>
            <person name="Hikiji T."/>
            <person name="Kobatake N."/>
            <person name="Inagaki H."/>
            <person name="Ikema Y."/>
            <person name="Okamoto S."/>
            <person name="Okitani R."/>
            <person name="Kawakami T."/>
            <person name="Noguchi S."/>
            <person name="Itoh T."/>
            <person name="Shigeta K."/>
            <person name="Senba T."/>
            <person name="Matsumura K."/>
            <person name="Nakajima Y."/>
            <person name="Mizuno T."/>
            <person name="Morinaga M."/>
            <person name="Sasaki M."/>
            <person name="Togashi T."/>
            <person name="Oyama M."/>
            <person name="Hata H."/>
            <person name="Watanabe M."/>
            <person name="Komatsu T."/>
            <person name="Mizushima-Sugano J."/>
            <person name="Satoh T."/>
            <person name="Shirai Y."/>
            <person name="Takahashi Y."/>
            <person name="Nakagawa K."/>
            <person name="Okumura K."/>
            <person name="Nagase T."/>
            <person name="Nomura N."/>
            <person name="Kikuchi H."/>
            <person name="Masuho Y."/>
            <person name="Yamashita R."/>
            <person name="Nakai K."/>
            <person name="Yada T."/>
            <person name="Nakamura Y."/>
            <person name="Ohara O."/>
            <person name="Isogai T."/>
            <person name="Sugano S."/>
        </authorList>
    </citation>
    <scope>NUCLEOTIDE SEQUENCE [LARGE SCALE MRNA] (ISOFORMS 4 AND 5)</scope>
    <scope>NUCLEOTIDE SEQUENCE [LARGE SCALE MRNA] OF 511-921 (ISOFORMS 1/2)</scope>
    <scope>VARIANT GLY-638</scope>
    <source>
        <tissue>Esophageal carcinoma</tissue>
        <tissue>Thymus</tissue>
    </source>
</reference>
<reference key="4">
    <citation type="journal article" date="2003" name="Science">
        <title>Human chromosome 7: DNA sequence and biology.</title>
        <authorList>
            <person name="Scherer S.W."/>
            <person name="Cheung J."/>
            <person name="MacDonald J.R."/>
            <person name="Osborne L.R."/>
            <person name="Nakabayashi K."/>
            <person name="Herbrick J.-A."/>
            <person name="Carson A.R."/>
            <person name="Parker-Katiraee L."/>
            <person name="Skaug J."/>
            <person name="Khaja R."/>
            <person name="Zhang J."/>
            <person name="Hudek A.K."/>
            <person name="Li M."/>
            <person name="Haddad M."/>
            <person name="Duggan G.E."/>
            <person name="Fernandez B.A."/>
            <person name="Kanematsu E."/>
            <person name="Gentles S."/>
            <person name="Christopoulos C.C."/>
            <person name="Choufani S."/>
            <person name="Kwasnicka D."/>
            <person name="Zheng X.H."/>
            <person name="Lai Z."/>
            <person name="Nusskern D.R."/>
            <person name="Zhang Q."/>
            <person name="Gu Z."/>
            <person name="Lu F."/>
            <person name="Zeesman S."/>
            <person name="Nowaczyk M.J."/>
            <person name="Teshima I."/>
            <person name="Chitayat D."/>
            <person name="Shuman C."/>
            <person name="Weksberg R."/>
            <person name="Zackai E.H."/>
            <person name="Grebe T.A."/>
            <person name="Cox S.R."/>
            <person name="Kirkpatrick S.J."/>
            <person name="Rahman N."/>
            <person name="Friedman J.M."/>
            <person name="Heng H.H.Q."/>
            <person name="Pelicci P.G."/>
            <person name="Lo-Coco F."/>
            <person name="Belloni E."/>
            <person name="Shaffer L.G."/>
            <person name="Pober B."/>
            <person name="Morton C.C."/>
            <person name="Gusella J.F."/>
            <person name="Bruns G.A.P."/>
            <person name="Korf B.R."/>
            <person name="Quade B.J."/>
            <person name="Ligon A.H."/>
            <person name="Ferguson H."/>
            <person name="Higgins A.W."/>
            <person name="Leach N.T."/>
            <person name="Herrick S.R."/>
            <person name="Lemyre E."/>
            <person name="Farra C.G."/>
            <person name="Kim H.-G."/>
            <person name="Summers A.M."/>
            <person name="Gripp K.W."/>
            <person name="Roberts W."/>
            <person name="Szatmari P."/>
            <person name="Winsor E.J.T."/>
            <person name="Grzeschik K.-H."/>
            <person name="Teebi A."/>
            <person name="Minassian B.A."/>
            <person name="Kere J."/>
            <person name="Armengol L."/>
            <person name="Pujana M.A."/>
            <person name="Estivill X."/>
            <person name="Wilson M.D."/>
            <person name="Koop B.F."/>
            <person name="Tosi S."/>
            <person name="Moore G.E."/>
            <person name="Boright A.P."/>
            <person name="Zlotorynski E."/>
            <person name="Kerem B."/>
            <person name="Kroisel P.M."/>
            <person name="Petek E."/>
            <person name="Oscier D.G."/>
            <person name="Mould S.J."/>
            <person name="Doehner H."/>
            <person name="Doehner K."/>
            <person name="Rommens J.M."/>
            <person name="Vincent J.B."/>
            <person name="Venter J.C."/>
            <person name="Li P.W."/>
            <person name="Mural R.J."/>
            <person name="Adams M.D."/>
            <person name="Tsui L.-C."/>
        </authorList>
    </citation>
    <scope>NUCLEOTIDE SEQUENCE [LARGE SCALE GENOMIC DNA]</scope>
</reference>
<reference key="5">
    <citation type="journal article" date="1999" name="DNA Res.">
        <title>Prediction of the coding sequences of unidentified human genes. XV. The complete sequences of 100 new cDNA clones from brain which code for large proteins in vitro.</title>
        <authorList>
            <person name="Nagase T."/>
            <person name="Ishikawa K."/>
            <person name="Kikuno R."/>
            <person name="Hirosawa M."/>
            <person name="Nomura N."/>
            <person name="Ohara O."/>
        </authorList>
    </citation>
    <scope>NUCLEOTIDE SEQUENCE [LARGE SCALE MRNA] OF 79-921 (ISOFORM 1)</scope>
    <source>
        <tissue>Brain</tissue>
    </source>
</reference>
<reference key="6">
    <citation type="journal article" date="2002" name="DNA Res.">
        <title>Construction of expression-ready cDNA clones for KIAA genes: manual curation of 330 KIAA cDNA clones.</title>
        <authorList>
            <person name="Nakajima D."/>
            <person name="Okazaki N."/>
            <person name="Yamakawa H."/>
            <person name="Kikuno R."/>
            <person name="Ohara O."/>
            <person name="Nagase T."/>
        </authorList>
    </citation>
    <scope>SEQUENCE REVISION</scope>
</reference>
<reference key="7">
    <citation type="journal article" date="2007" name="BMC Genomics">
        <title>The full-ORF clone resource of the German cDNA consortium.</title>
        <authorList>
            <person name="Bechtel S."/>
            <person name="Rosenfelder H."/>
            <person name="Duda A."/>
            <person name="Schmidt C.P."/>
            <person name="Ernst U."/>
            <person name="Wellenreuther R."/>
            <person name="Mehrle A."/>
            <person name="Schuster C."/>
            <person name="Bahr A."/>
            <person name="Bloecker H."/>
            <person name="Heubner D."/>
            <person name="Hoerlein A."/>
            <person name="Michel G."/>
            <person name="Wedler H."/>
            <person name="Koehrer K."/>
            <person name="Ottenwaelder B."/>
            <person name="Poustka A."/>
            <person name="Wiemann S."/>
            <person name="Schupp I."/>
        </authorList>
    </citation>
    <scope>NUCLEOTIDE SEQUENCE [LARGE SCALE MRNA] OF 141-921</scope>
    <source>
        <tissue>Melanoma</tissue>
    </source>
</reference>
<reference key="8">
    <citation type="journal article" date="2004" name="Genome Res.">
        <title>The status, quality, and expansion of the NIH full-length cDNA project: the Mammalian Gene Collection (MGC).</title>
        <authorList>
            <consortium name="The MGC Project Team"/>
        </authorList>
    </citation>
    <scope>NUCLEOTIDE SEQUENCE [LARGE SCALE MRNA] OF 454-921 (ISOFORM 6)</scope>
    <source>
        <tissue>Colon</tissue>
    </source>
</reference>
<reference key="9">
    <citation type="journal article" date="2001" name="Genomics">
        <title>Genomic analysis of synaptotagmin genes.</title>
        <authorList>
            <person name="Craxton M.A."/>
        </authorList>
    </citation>
    <scope>NUCLEOTIDE SEQUENCE [MRNA] OF 747-904</scope>
    <source>
        <tissue>Brain</tissue>
    </source>
</reference>
<reference key="10">
    <citation type="journal article" date="2006" name="Cell">
        <title>Global, in vivo, and site-specific phosphorylation dynamics in signaling networks.</title>
        <authorList>
            <person name="Olsen J.V."/>
            <person name="Blagoev B."/>
            <person name="Gnad F."/>
            <person name="Macek B."/>
            <person name="Kumar C."/>
            <person name="Mortensen P."/>
            <person name="Mann M."/>
        </authorList>
    </citation>
    <scope>IDENTIFICATION BY MASS SPECTROMETRY [LARGE SCALE ANALYSIS]</scope>
    <source>
        <tissue>Cervix carcinoma</tissue>
    </source>
</reference>
<reference key="11">
    <citation type="journal article" date="2007" name="J. Proteome Res.">
        <title>Improved titanium dioxide enrichment of phosphopeptides from HeLa cells and high confident phosphopeptide identification by cross-validation of MS/MS and MS/MS/MS spectra.</title>
        <authorList>
            <person name="Yu L.R."/>
            <person name="Zhu Z."/>
            <person name="Chan K.C."/>
            <person name="Issaq H.J."/>
            <person name="Dimitrov D.S."/>
            <person name="Veenstra T.D."/>
        </authorList>
    </citation>
    <scope>PHOSPHORYLATION [LARGE SCALE ANALYSIS] AT SER-743</scope>
    <scope>IDENTIFICATION BY MASS SPECTROMETRY [LARGE SCALE ANALYSIS]</scope>
    <source>
        <tissue>Cervix carcinoma</tissue>
    </source>
</reference>
<reference key="12">
    <citation type="journal article" date="2008" name="Mol. Cell">
        <title>Kinase-selective enrichment enables quantitative phosphoproteomics of the kinome across the cell cycle.</title>
        <authorList>
            <person name="Daub H."/>
            <person name="Olsen J.V."/>
            <person name="Bairlein M."/>
            <person name="Gnad F."/>
            <person name="Oppermann F.S."/>
            <person name="Korner R."/>
            <person name="Greff Z."/>
            <person name="Keri G."/>
            <person name="Stemmann O."/>
            <person name="Mann M."/>
        </authorList>
    </citation>
    <scope>PHOSPHORYLATION [LARGE SCALE ANALYSIS] AT SER-743; SER-758 AND SER-761</scope>
    <scope>IDENTIFICATION BY MASS SPECTROMETRY [LARGE SCALE ANALYSIS]</scope>
    <source>
        <tissue>Cervix carcinoma</tissue>
    </source>
</reference>
<reference key="13">
    <citation type="journal article" date="2008" name="Proc. Natl. Acad. Sci. U.S.A.">
        <title>A quantitative atlas of mitotic phosphorylation.</title>
        <authorList>
            <person name="Dephoure N."/>
            <person name="Zhou C."/>
            <person name="Villen J."/>
            <person name="Beausoleil S.A."/>
            <person name="Bakalarski C.E."/>
            <person name="Elledge S.J."/>
            <person name="Gygi S.P."/>
        </authorList>
    </citation>
    <scope>PHOSPHORYLATION [LARGE SCALE ANALYSIS] AT SER-743; SER-755; SER-758 AND SER-761</scope>
    <scope>IDENTIFICATION BY MASS SPECTROMETRY [LARGE SCALE ANALYSIS]</scope>
    <source>
        <tissue>Cervix carcinoma</tissue>
    </source>
</reference>
<reference key="14">
    <citation type="journal article" date="2009" name="Sci. Signal.">
        <title>Quantitative phosphoproteomic analysis of T cell receptor signaling reveals system-wide modulation of protein-protein interactions.</title>
        <authorList>
            <person name="Mayya V."/>
            <person name="Lundgren D.H."/>
            <person name="Hwang S.-I."/>
            <person name="Rezaul K."/>
            <person name="Wu L."/>
            <person name="Eng J.K."/>
            <person name="Rodionov V."/>
            <person name="Han D.K."/>
        </authorList>
    </citation>
    <scope>PHOSPHORYLATION [LARGE SCALE ANALYSIS] AT SER-691; SER-739; SER-748; SER-755; SER-758 AND SER-761</scope>
    <scope>IDENTIFICATION BY MASS SPECTROMETRY [LARGE SCALE ANALYSIS]</scope>
    <source>
        <tissue>Leukemic T-cell</tissue>
    </source>
</reference>
<reference key="15">
    <citation type="journal article" date="2010" name="Dev. Cell">
        <title>Extended-synaptotagmin-2 mediates FGF receptor endocytosis and ERK activation in vivo.</title>
        <authorList>
            <person name="Jean S."/>
            <person name="Mikryukov A."/>
            <person name="Tremblay M.G."/>
            <person name="Baril J."/>
            <person name="Guillou F."/>
            <person name="Bellenfant S."/>
            <person name="Moss T."/>
        </authorList>
    </citation>
    <scope>INTERACTION WITH FGFR1 AND AP2B1</scope>
    <scope>SUBCELLULAR LOCATION</scope>
    <scope>FUNCTION</scope>
</reference>
<reference key="16">
    <citation type="journal article" date="2010" name="Sci. Signal.">
        <title>Quantitative phosphoproteomics reveals widespread full phosphorylation site occupancy during mitosis.</title>
        <authorList>
            <person name="Olsen J.V."/>
            <person name="Vermeulen M."/>
            <person name="Santamaria A."/>
            <person name="Kumar C."/>
            <person name="Miller M.L."/>
            <person name="Jensen L.J."/>
            <person name="Gnad F."/>
            <person name="Cox J."/>
            <person name="Jensen T.S."/>
            <person name="Nigg E.A."/>
            <person name="Brunak S."/>
            <person name="Mann M."/>
        </authorList>
    </citation>
    <scope>PHOSPHORYLATION [LARGE SCALE ANALYSIS] AT SER-743; SER-758 AND SER-761</scope>
    <scope>IDENTIFICATION BY MASS SPECTROMETRY [LARGE SCALE ANALYSIS]</scope>
    <source>
        <tissue>Cervix carcinoma</tissue>
    </source>
</reference>
<reference key="17">
    <citation type="journal article" date="2011" name="BMC Syst. Biol.">
        <title>Initial characterization of the human central proteome.</title>
        <authorList>
            <person name="Burkard T.R."/>
            <person name="Planyavsky M."/>
            <person name="Kaupe I."/>
            <person name="Breitwieser F.P."/>
            <person name="Buerckstuemmer T."/>
            <person name="Bennett K.L."/>
            <person name="Superti-Furga G."/>
            <person name="Colinge J."/>
        </authorList>
    </citation>
    <scope>IDENTIFICATION BY MASS SPECTROMETRY [LARGE SCALE ANALYSIS]</scope>
</reference>
<reference key="18">
    <citation type="journal article" date="2011" name="Sci. Signal.">
        <title>System-wide temporal characterization of the proteome and phosphoproteome of human embryonic stem cell differentiation.</title>
        <authorList>
            <person name="Rigbolt K.T."/>
            <person name="Prokhorova T.A."/>
            <person name="Akimov V."/>
            <person name="Henningsen J."/>
            <person name="Johansen P.T."/>
            <person name="Kratchmarova I."/>
            <person name="Kassem M."/>
            <person name="Mann M."/>
            <person name="Olsen J.V."/>
            <person name="Blagoev B."/>
        </authorList>
    </citation>
    <scope>PHOSPHORYLATION [LARGE SCALE ANALYSIS] AT SER-758 AND SER-761</scope>
    <scope>IDENTIFICATION BY MASS SPECTROMETRY [LARGE SCALE ANALYSIS]</scope>
</reference>
<reference key="19">
    <citation type="journal article" date="2013" name="Cell">
        <title>PI(4,5)P(2)-dependent and Ca(2+)-regulated ER-PM interactions mediated by the extended synaptotagmins.</title>
        <authorList>
            <person name="Giordano F."/>
            <person name="Saheki Y."/>
            <person name="Idevall-Hagren O."/>
            <person name="Colombo S.F."/>
            <person name="Pirruccello M."/>
            <person name="Milosevic I."/>
            <person name="Gracheva E.O."/>
            <person name="Bagriantsev S.N."/>
            <person name="Borgese N."/>
            <person name="De Camilli P."/>
        </authorList>
    </citation>
    <scope>FUNCTION</scope>
    <scope>SUBCELLULAR LOCATION</scope>
    <scope>TOPOLOGY</scope>
    <scope>LIPID-BINDING</scope>
    <scope>DOMAIN</scope>
    <scope>MUTAGENESIS OF 833-LYS--LYS-840</scope>
    <scope>INTERACTION WITH ESYT1 AND ESYT3</scope>
</reference>
<reference key="20">
    <citation type="journal article" date="2013" name="J. Proteome Res.">
        <title>Toward a comprehensive characterization of a human cancer cell phosphoproteome.</title>
        <authorList>
            <person name="Zhou H."/>
            <person name="Di Palma S."/>
            <person name="Preisinger C."/>
            <person name="Peng M."/>
            <person name="Polat A.N."/>
            <person name="Heck A.J."/>
            <person name="Mohammed S."/>
        </authorList>
    </citation>
    <scope>PHOSPHORYLATION [LARGE SCALE ANALYSIS] AT SER-691; SER-736; SER-739; SER-743 AND SER-761</scope>
    <scope>IDENTIFICATION BY MASS SPECTROMETRY [LARGE SCALE ANALYSIS]</scope>
    <source>
        <tissue>Cervix carcinoma</tissue>
        <tissue>Erythroleukemia</tissue>
    </source>
</reference>
<reference key="21">
    <citation type="journal article" date="2014" name="J. Proteomics">
        <title>An enzyme assisted RP-RPLC approach for in-depth analysis of human liver phosphoproteome.</title>
        <authorList>
            <person name="Bian Y."/>
            <person name="Song C."/>
            <person name="Cheng K."/>
            <person name="Dong M."/>
            <person name="Wang F."/>
            <person name="Huang J."/>
            <person name="Sun D."/>
            <person name="Wang L."/>
            <person name="Ye M."/>
            <person name="Zou H."/>
        </authorList>
    </citation>
    <scope>PHOSPHORYLATION [LARGE SCALE ANALYSIS] AT SER-693; THR-705 AND SER-761</scope>
    <scope>IDENTIFICATION BY MASS SPECTROMETRY [LARGE SCALE ANALYSIS]</scope>
    <source>
        <tissue>Liver</tissue>
    </source>
</reference>
<reference key="22">
    <citation type="journal article" date="2015" name="Proteomics">
        <title>N-terminome analysis of the human mitochondrial proteome.</title>
        <authorList>
            <person name="Vaca Jacome A.S."/>
            <person name="Rabilloud T."/>
            <person name="Schaeffer-Reiss C."/>
            <person name="Rompais M."/>
            <person name="Ayoub D."/>
            <person name="Lane L."/>
            <person name="Bairoch A."/>
            <person name="Van Dorsselaer A."/>
            <person name="Carapito C."/>
        </authorList>
    </citation>
    <scope>IDENTIFICATION BY MASS SPECTROMETRY [LARGE SCALE ANALYSIS]</scope>
</reference>
<reference key="23">
    <citation type="journal article" date="2018" name="Cell">
        <title>Aster proteins facilitate nonvesicular plasma membrane to ER cholesterol transport in mammalian cells.</title>
        <authorList>
            <person name="Sandhu J."/>
            <person name="Li S."/>
            <person name="Fairall L."/>
            <person name="Pfisterer S.G."/>
            <person name="Gurnett J.E."/>
            <person name="Xiao X."/>
            <person name="Weston T.A."/>
            <person name="Vashi D."/>
            <person name="Ferrari A."/>
            <person name="Orozco J.L."/>
            <person name="Hartman C.L."/>
            <person name="Strugatsky D."/>
            <person name="Lee S.D."/>
            <person name="He C."/>
            <person name="Hong C."/>
            <person name="Jiang H."/>
            <person name="Bentolila L.A."/>
            <person name="Gatta A.T."/>
            <person name="Levine T.P."/>
            <person name="Ferng A."/>
            <person name="Lee R."/>
            <person name="Ford D.A."/>
            <person name="Young S.G."/>
            <person name="Ikonen E."/>
            <person name="Schwabe J.W.R."/>
            <person name="Tontonoz P."/>
        </authorList>
    </citation>
    <scope>SUBCELLULAR LOCATION</scope>
</reference>
<reference key="24">
    <citation type="journal article" date="2018" name="Elife">
        <title>GRAM domain proteins specialize functionally distinct ER-PM contact sites in human cells.</title>
        <authorList>
            <person name="Besprozvannaya M."/>
            <person name="Dickson E."/>
            <person name="Li H."/>
            <person name="Ginburg K.S."/>
            <person name="Bers D.M."/>
            <person name="Auwerx J."/>
            <person name="Nunnari J."/>
        </authorList>
    </citation>
    <scope>SUBCELLULAR LOCATION</scope>
</reference>
<reference key="25">
    <citation type="journal article" date="2016" name="J. Cell Biol.">
        <title>Dynamic formation of ER-PM junctions presents a lipid phosphatase to regulate phosphoinositides.</title>
        <authorList>
            <person name="Dickson E.J."/>
            <person name="Jensen J.B."/>
            <person name="Vivas O."/>
            <person name="Kruse M."/>
            <person name="Traynor-Kaplan A.E."/>
            <person name="Hille B."/>
        </authorList>
    </citation>
    <scope>FUNCTION</scope>
    <scope>SUBCELLULAR LOCATION</scope>
</reference>
<reference key="26">
    <citation type="submission" date="2006-10" db="PDB data bank">
        <title>Solution structure of the third C2 domain of KIAA1228 protein.</title>
        <authorList>
            <consortium name="RIKEN structural genomics initiative (RSGI)"/>
        </authorList>
    </citation>
    <scope>STRUCTURE BY NMR OF 222-350</scope>
</reference>
<reference key="27">
    <citation type="journal article" date="2014" name="Nature">
        <title>Structure of a lipid-bound extended synaptotagmin indicates a role in lipid transfer.</title>
        <authorList>
            <person name="Schauder C.M."/>
            <person name="Wu X."/>
            <person name="Saheki Y."/>
            <person name="Narayanaswamy P."/>
            <person name="Torta F."/>
            <person name="Wenk M.R."/>
            <person name="De Camilli P."/>
            <person name="Reinisch K.M."/>
        </authorList>
    </citation>
    <scope>X-RAY CRYSTALLOGRAPHY (2.44 ANGSTROMS) OF 191-662 IN COMPLEX WITH PHOSPHATIDYLETHANOLAMINE</scope>
    <scope>LIPID-BINDING</scope>
    <scope>FUNCTION</scope>
    <scope>DOMAIN</scope>
    <scope>SUBUNIT</scope>
</reference>
<reference key="28">
    <citation type="journal article" date="2014" name="Structure">
        <title>Structure and Ca(2+)-binding properties of the tandem C(2) domains of E-Syt2.</title>
        <authorList>
            <person name="Xu J."/>
            <person name="Bacaj T."/>
            <person name="Zhou A."/>
            <person name="Tomchick D.R."/>
            <person name="Sudhof T.C."/>
            <person name="Rizo J."/>
        </authorList>
    </citation>
    <scope>X-RAY CRYSTALLOGRAPHY (2.10 ANGSTROMS) OF 363-660 IN COMPLEX WITH CALCIUM</scope>
    <scope>DOMAIN</scope>
    <scope>CALCIUM-BINDING</scope>
    <scope>MUTAGENESIS OF ASP-401; ASP-413 AND ASP-466</scope>
</reference>
<organism>
    <name type="scientific">Homo sapiens</name>
    <name type="common">Human</name>
    <dbReference type="NCBI Taxonomy" id="9606"/>
    <lineage>
        <taxon>Eukaryota</taxon>
        <taxon>Metazoa</taxon>
        <taxon>Chordata</taxon>
        <taxon>Craniata</taxon>
        <taxon>Vertebrata</taxon>
        <taxon>Euteleostomi</taxon>
        <taxon>Mammalia</taxon>
        <taxon>Eutheria</taxon>
        <taxon>Euarchontoglires</taxon>
        <taxon>Primates</taxon>
        <taxon>Haplorrhini</taxon>
        <taxon>Catarrhini</taxon>
        <taxon>Hominidae</taxon>
        <taxon>Homo</taxon>
    </lineage>
</organism>